<sequence length="96" mass="10429">MSAVTVNDDGLVLRLYIQPKASRDSIVGLHGDEVKVAITAPPVDGQANSHLVKFLGKQFRVAKSQVVIEKGELGRHKQIKIINPQQIPPEIAALIN</sequence>
<feature type="chain" id="PRO_0000139442" description="UPF0235 protein YggU">
    <location>
        <begin position="1"/>
        <end position="96"/>
    </location>
</feature>
<dbReference type="EMBL" id="AE014075">
    <property type="protein sequence ID" value="AAN81987.1"/>
    <property type="status" value="ALT_INIT"/>
    <property type="molecule type" value="Genomic_DNA"/>
</dbReference>
<dbReference type="RefSeq" id="WP_001277222.1">
    <property type="nucleotide sequence ID" value="NZ_CP051263.1"/>
</dbReference>
<dbReference type="SMR" id="Q8FE28"/>
<dbReference type="STRING" id="199310.c3539"/>
<dbReference type="GeneID" id="86861043"/>
<dbReference type="KEGG" id="ecc:c3539"/>
<dbReference type="eggNOG" id="COG1872">
    <property type="taxonomic scope" value="Bacteria"/>
</dbReference>
<dbReference type="HOGENOM" id="CLU_130694_5_0_6"/>
<dbReference type="Proteomes" id="UP000001410">
    <property type="component" value="Chromosome"/>
</dbReference>
<dbReference type="GO" id="GO:0005737">
    <property type="term" value="C:cytoplasm"/>
    <property type="evidence" value="ECO:0007669"/>
    <property type="project" value="TreeGrafter"/>
</dbReference>
<dbReference type="Gene3D" id="3.30.1200.10">
    <property type="entry name" value="YggU-like"/>
    <property type="match status" value="1"/>
</dbReference>
<dbReference type="HAMAP" id="MF_00634">
    <property type="entry name" value="UPF0235"/>
    <property type="match status" value="1"/>
</dbReference>
<dbReference type="InterPro" id="IPR003746">
    <property type="entry name" value="DUF167"/>
</dbReference>
<dbReference type="InterPro" id="IPR036591">
    <property type="entry name" value="YggU-like_sf"/>
</dbReference>
<dbReference type="NCBIfam" id="TIGR00251">
    <property type="entry name" value="DUF167 family protein"/>
    <property type="match status" value="1"/>
</dbReference>
<dbReference type="NCBIfam" id="NF003466">
    <property type="entry name" value="PRK05090.1"/>
    <property type="match status" value="1"/>
</dbReference>
<dbReference type="PANTHER" id="PTHR13420">
    <property type="entry name" value="UPF0235 PROTEIN C15ORF40"/>
    <property type="match status" value="1"/>
</dbReference>
<dbReference type="PANTHER" id="PTHR13420:SF7">
    <property type="entry name" value="UPF0235 PROTEIN C15ORF40"/>
    <property type="match status" value="1"/>
</dbReference>
<dbReference type="Pfam" id="PF02594">
    <property type="entry name" value="DUF167"/>
    <property type="match status" value="1"/>
</dbReference>
<dbReference type="SMART" id="SM01152">
    <property type="entry name" value="DUF167"/>
    <property type="match status" value="1"/>
</dbReference>
<dbReference type="SUPFAM" id="SSF69786">
    <property type="entry name" value="YggU-like"/>
    <property type="match status" value="1"/>
</dbReference>
<proteinExistence type="inferred from homology"/>
<reference key="1">
    <citation type="journal article" date="2002" name="Proc. Natl. Acad. Sci. U.S.A.">
        <title>Extensive mosaic structure revealed by the complete genome sequence of uropathogenic Escherichia coli.</title>
        <authorList>
            <person name="Welch R.A."/>
            <person name="Burland V."/>
            <person name="Plunkett G. III"/>
            <person name="Redford P."/>
            <person name="Roesch P."/>
            <person name="Rasko D."/>
            <person name="Buckles E.L."/>
            <person name="Liou S.-R."/>
            <person name="Boutin A."/>
            <person name="Hackett J."/>
            <person name="Stroud D."/>
            <person name="Mayhew G.F."/>
            <person name="Rose D.J."/>
            <person name="Zhou S."/>
            <person name="Schwartz D.C."/>
            <person name="Perna N.T."/>
            <person name="Mobley H.L.T."/>
            <person name="Donnenberg M.S."/>
            <person name="Blattner F.R."/>
        </authorList>
    </citation>
    <scope>NUCLEOTIDE SEQUENCE [LARGE SCALE GENOMIC DNA]</scope>
    <source>
        <strain>CFT073 / ATCC 700928 / UPEC</strain>
    </source>
</reference>
<comment type="similarity">
    <text evidence="1">Belongs to the UPF0235 family.</text>
</comment>
<comment type="sequence caution" evidence="2">
    <conflict type="erroneous initiation">
        <sequence resource="EMBL-CDS" id="AAN81987"/>
    </conflict>
</comment>
<gene>
    <name evidence="1" type="primary">yggU</name>
    <name type="ordered locus">c3539</name>
</gene>
<keyword id="KW-1185">Reference proteome</keyword>
<organism>
    <name type="scientific">Escherichia coli O6:H1 (strain CFT073 / ATCC 700928 / UPEC)</name>
    <dbReference type="NCBI Taxonomy" id="199310"/>
    <lineage>
        <taxon>Bacteria</taxon>
        <taxon>Pseudomonadati</taxon>
        <taxon>Pseudomonadota</taxon>
        <taxon>Gammaproteobacteria</taxon>
        <taxon>Enterobacterales</taxon>
        <taxon>Enterobacteriaceae</taxon>
        <taxon>Escherichia</taxon>
    </lineage>
</organism>
<evidence type="ECO:0000255" key="1">
    <source>
        <dbReference type="HAMAP-Rule" id="MF_00634"/>
    </source>
</evidence>
<evidence type="ECO:0000305" key="2"/>
<name>YGGU_ECOL6</name>
<accession>Q8FE28</accession>
<protein>
    <recommendedName>
        <fullName evidence="1">UPF0235 protein YggU</fullName>
    </recommendedName>
</protein>